<dbReference type="EMBL" id="U81369">
    <property type="protein sequence ID" value="AAB38975.1"/>
    <property type="molecule type" value="mRNA"/>
</dbReference>
<dbReference type="EMBL" id="AY141229">
    <property type="protein sequence ID" value="AAN52793.1"/>
    <property type="molecule type" value="mRNA"/>
</dbReference>
<dbReference type="EMBL" id="AC006836">
    <property type="protein sequence ID" value="AAD20073.1"/>
    <property type="molecule type" value="Genomic_DNA"/>
</dbReference>
<dbReference type="EMBL" id="CP002685">
    <property type="protein sequence ID" value="AEC05738.1"/>
    <property type="molecule type" value="Genomic_DNA"/>
</dbReference>
<dbReference type="EMBL" id="CP002685">
    <property type="protein sequence ID" value="AEC05739.1"/>
    <property type="molecule type" value="Genomic_DNA"/>
</dbReference>
<dbReference type="EMBL" id="CP002685">
    <property type="protein sequence ID" value="AEC05740.1"/>
    <property type="molecule type" value="Genomic_DNA"/>
</dbReference>
<dbReference type="EMBL" id="AY063894">
    <property type="protein sequence ID" value="AAL36250.1"/>
    <property type="molecule type" value="mRNA"/>
</dbReference>
<dbReference type="EMBL" id="AY096386">
    <property type="protein sequence ID" value="AAM20027.1"/>
    <property type="molecule type" value="mRNA"/>
</dbReference>
<dbReference type="PIR" id="S57793">
    <property type="entry name" value="S57793"/>
</dbReference>
<dbReference type="RefSeq" id="NP_178466.1">
    <molecule id="P29383-1"/>
    <property type="nucleotide sequence ID" value="NM_126418.2"/>
</dbReference>
<dbReference type="RefSeq" id="NP_849930.1">
    <molecule id="P29383-3"/>
    <property type="nucleotide sequence ID" value="NM_179599.2"/>
</dbReference>
<dbReference type="RefSeq" id="NP_973411.1">
    <molecule id="P29383-2"/>
    <property type="nucleotide sequence ID" value="NM_201682.3"/>
</dbReference>
<dbReference type="SMR" id="P29383"/>
<dbReference type="BioGRID" id="299">
    <property type="interactions" value="20"/>
</dbReference>
<dbReference type="DIP" id="DIP-33748N"/>
<dbReference type="FunCoup" id="P29383">
    <property type="interactions" value="26"/>
</dbReference>
<dbReference type="IntAct" id="P29383">
    <property type="interactions" value="22"/>
</dbReference>
<dbReference type="STRING" id="3702.P29383"/>
<dbReference type="iPTMnet" id="P29383"/>
<dbReference type="PaxDb" id="3702-AT2G03710.1"/>
<dbReference type="ProteomicsDB" id="244886">
    <molecule id="P29383-1"/>
</dbReference>
<dbReference type="EnsemblPlants" id="AT2G03710.1">
    <molecule id="P29383-1"/>
    <property type="protein sequence ID" value="AT2G03710.1"/>
    <property type="gene ID" value="AT2G03710"/>
</dbReference>
<dbReference type="EnsemblPlants" id="AT2G03710.2">
    <molecule id="P29383-3"/>
    <property type="protein sequence ID" value="AT2G03710.2"/>
    <property type="gene ID" value="AT2G03710"/>
</dbReference>
<dbReference type="EnsemblPlants" id="AT2G03710.3">
    <molecule id="P29383-2"/>
    <property type="protein sequence ID" value="AT2G03710.3"/>
    <property type="gene ID" value="AT2G03710"/>
</dbReference>
<dbReference type="GeneID" id="814898"/>
<dbReference type="Gramene" id="AT2G03710.1">
    <molecule id="P29383-1"/>
    <property type="protein sequence ID" value="AT2G03710.1"/>
    <property type="gene ID" value="AT2G03710"/>
</dbReference>
<dbReference type="Gramene" id="AT2G03710.2">
    <molecule id="P29383-3"/>
    <property type="protein sequence ID" value="AT2G03710.2"/>
    <property type="gene ID" value="AT2G03710"/>
</dbReference>
<dbReference type="Gramene" id="AT2G03710.3">
    <molecule id="P29383-2"/>
    <property type="protein sequence ID" value="AT2G03710.3"/>
    <property type="gene ID" value="AT2G03710"/>
</dbReference>
<dbReference type="KEGG" id="ath:AT2G03710"/>
<dbReference type="Araport" id="AT2G03710"/>
<dbReference type="TAIR" id="AT2G03710">
    <property type="gene designation" value="SEP4"/>
</dbReference>
<dbReference type="eggNOG" id="KOG0014">
    <property type="taxonomic scope" value="Eukaryota"/>
</dbReference>
<dbReference type="HOGENOM" id="CLU_053053_0_2_1"/>
<dbReference type="InParanoid" id="P29383"/>
<dbReference type="OMA" id="NLQHPRF"/>
<dbReference type="OrthoDB" id="1898716at2759"/>
<dbReference type="PhylomeDB" id="P29383"/>
<dbReference type="PRO" id="PR:P29383"/>
<dbReference type="Proteomes" id="UP000006548">
    <property type="component" value="Chromosome 2"/>
</dbReference>
<dbReference type="ExpressionAtlas" id="P29383">
    <property type="expression patterns" value="baseline and differential"/>
</dbReference>
<dbReference type="GO" id="GO:0005634">
    <property type="term" value="C:nucleus"/>
    <property type="evidence" value="ECO:0007669"/>
    <property type="project" value="UniProtKB-SubCell"/>
</dbReference>
<dbReference type="GO" id="GO:0003700">
    <property type="term" value="F:DNA-binding transcription factor activity"/>
    <property type="evidence" value="ECO:0000250"/>
    <property type="project" value="TAIR"/>
</dbReference>
<dbReference type="GO" id="GO:0046983">
    <property type="term" value="F:protein dimerization activity"/>
    <property type="evidence" value="ECO:0007669"/>
    <property type="project" value="InterPro"/>
</dbReference>
<dbReference type="GO" id="GO:0000977">
    <property type="term" value="F:RNA polymerase II transcription regulatory region sequence-specific DNA binding"/>
    <property type="evidence" value="ECO:0007669"/>
    <property type="project" value="InterPro"/>
</dbReference>
<dbReference type="GO" id="GO:0048440">
    <property type="term" value="P:carpel development"/>
    <property type="evidence" value="ECO:0000315"/>
    <property type="project" value="TAIR"/>
</dbReference>
<dbReference type="GO" id="GO:0030154">
    <property type="term" value="P:cell differentiation"/>
    <property type="evidence" value="ECO:0007669"/>
    <property type="project" value="UniProtKB-KW"/>
</dbReference>
<dbReference type="GO" id="GO:0010076">
    <property type="term" value="P:maintenance of floral meristem identity"/>
    <property type="evidence" value="ECO:0000315"/>
    <property type="project" value="TAIR"/>
</dbReference>
<dbReference type="GO" id="GO:0048441">
    <property type="term" value="P:petal development"/>
    <property type="evidence" value="ECO:0000315"/>
    <property type="project" value="TAIR"/>
</dbReference>
<dbReference type="GO" id="GO:0045944">
    <property type="term" value="P:positive regulation of transcription by RNA polymerase II"/>
    <property type="evidence" value="ECO:0007669"/>
    <property type="project" value="InterPro"/>
</dbReference>
<dbReference type="GO" id="GO:0048442">
    <property type="term" value="P:sepal development"/>
    <property type="evidence" value="ECO:0000315"/>
    <property type="project" value="TAIR"/>
</dbReference>
<dbReference type="GO" id="GO:0048443">
    <property type="term" value="P:stamen development"/>
    <property type="evidence" value="ECO:0000315"/>
    <property type="project" value="TAIR"/>
</dbReference>
<dbReference type="CDD" id="cd00265">
    <property type="entry name" value="MADS_MEF2_like"/>
    <property type="match status" value="1"/>
</dbReference>
<dbReference type="FunFam" id="3.40.1810.10:FF:000004">
    <property type="entry name" value="MADS-box transcription factor 1"/>
    <property type="match status" value="1"/>
</dbReference>
<dbReference type="Gene3D" id="3.40.1810.10">
    <property type="entry name" value="Transcription factor, MADS-box"/>
    <property type="match status" value="1"/>
</dbReference>
<dbReference type="InterPro" id="IPR050142">
    <property type="entry name" value="MADS-box/MEF2_TF"/>
</dbReference>
<dbReference type="InterPro" id="IPR033896">
    <property type="entry name" value="MEF2-like_N"/>
</dbReference>
<dbReference type="InterPro" id="IPR002487">
    <property type="entry name" value="TF_Kbox"/>
</dbReference>
<dbReference type="InterPro" id="IPR002100">
    <property type="entry name" value="TF_MADSbox"/>
</dbReference>
<dbReference type="InterPro" id="IPR036879">
    <property type="entry name" value="TF_MADSbox_sf"/>
</dbReference>
<dbReference type="PANTHER" id="PTHR48019">
    <property type="entry name" value="SERUM RESPONSE FACTOR HOMOLOG"/>
    <property type="match status" value="1"/>
</dbReference>
<dbReference type="Pfam" id="PF01486">
    <property type="entry name" value="K-box"/>
    <property type="match status" value="1"/>
</dbReference>
<dbReference type="Pfam" id="PF00319">
    <property type="entry name" value="SRF-TF"/>
    <property type="match status" value="1"/>
</dbReference>
<dbReference type="PRINTS" id="PR00404">
    <property type="entry name" value="MADSDOMAIN"/>
</dbReference>
<dbReference type="SMART" id="SM00432">
    <property type="entry name" value="MADS"/>
    <property type="match status" value="1"/>
</dbReference>
<dbReference type="SUPFAM" id="SSF55455">
    <property type="entry name" value="SRF-like"/>
    <property type="match status" value="1"/>
</dbReference>
<dbReference type="PROSITE" id="PS51297">
    <property type="entry name" value="K_BOX"/>
    <property type="match status" value="1"/>
</dbReference>
<dbReference type="PROSITE" id="PS00350">
    <property type="entry name" value="MADS_BOX_1"/>
    <property type="match status" value="1"/>
</dbReference>
<dbReference type="PROSITE" id="PS50066">
    <property type="entry name" value="MADS_BOX_2"/>
    <property type="match status" value="1"/>
</dbReference>
<accession>P29383</accession>
<accession>O04729</accession>
<accession>Q41252</accession>
<accession>Q7XJL0</accession>
<accession>Q8VZR9</accession>
<name>AGL3_ARATH</name>
<gene>
    <name type="primary">AGL3</name>
    <name evidence="10" type="synonym">SEP4</name>
    <name type="ordered locus">At2g03710</name>
    <name type="ORF">F19B11.16</name>
</gene>
<sequence length="258" mass="29573">MGRGKVELKRIENKINRQVTFAKRRNGLLKKAYELSVLCDAEIALLIFSNRGKLYEFCSSPSGMARTVDKYRKHSYATMDPNQSAKDLQDKYQDYLKLKSRVEILQHSQRHLLGEELSEMDVNELEHLERQVDASLRQIRSTKARSMLDQLSDLKTKEEMLLETNRDLRRKLEDSDAALTQSFWGSSAAEQQQQHQQQQQGMSSYQSNPPIQEAGFFKPLQGNVALQMSSHYNHNPANATNSATTSQNVNGFFPGWMV</sequence>
<evidence type="ECO:0000255" key="1">
    <source>
        <dbReference type="PROSITE-ProRule" id="PRU00251"/>
    </source>
</evidence>
<evidence type="ECO:0000255" key="2">
    <source>
        <dbReference type="PROSITE-ProRule" id="PRU00629"/>
    </source>
</evidence>
<evidence type="ECO:0000256" key="3">
    <source>
        <dbReference type="SAM" id="MobiDB-lite"/>
    </source>
</evidence>
<evidence type="ECO:0000269" key="4">
    <source>
    </source>
</evidence>
<evidence type="ECO:0000269" key="5">
    <source>
    </source>
</evidence>
<evidence type="ECO:0000269" key="6">
    <source>
    </source>
</evidence>
<evidence type="ECO:0000269" key="7">
    <source>
    </source>
</evidence>
<evidence type="ECO:0000303" key="8">
    <source>
    </source>
</evidence>
<evidence type="ECO:0000303" key="9">
    <source>
    </source>
</evidence>
<evidence type="ECO:0000303" key="10">
    <source>
    </source>
</evidence>
<evidence type="ECO:0000305" key="11"/>
<protein>
    <recommendedName>
        <fullName>Agamous-like MADS-box protein AGL3</fullName>
    </recommendedName>
    <alternativeName>
        <fullName evidence="10">Protein SEPALLATA 4</fullName>
    </alternativeName>
</protein>
<reference key="1">
    <citation type="journal article" date="1995" name="Plant Mol. Biol.">
        <title>The Arabidopsis MADS-box gene AGL3 is widely expressed and encodes a sequence-specific DNA-binding protein.</title>
        <authorList>
            <person name="Huang H."/>
            <person name="Tudor M."/>
            <person name="Weiss C.A."/>
            <person name="Hu Y."/>
            <person name="Ma H."/>
        </authorList>
    </citation>
    <scope>NUCLEOTIDE SEQUENCE [MRNA] (ISOFORM 1)</scope>
    <scope>TISSUE SPECIFICITY</scope>
    <source>
        <strain>cv. Columbia</strain>
    </source>
</reference>
<reference key="2">
    <citation type="journal article" date="2003" name="Plant Cell">
        <title>Molecular and phylogenetic analyses of the complete MADS-box transcription factor family in Arabidopsis: new openings to the MADS world.</title>
        <authorList>
            <person name="Parenicova L."/>
            <person name="de Folter S."/>
            <person name="Kieffer M."/>
            <person name="Horner D.S."/>
            <person name="Favalli C."/>
            <person name="Busscher J."/>
            <person name="Cook H.E."/>
            <person name="Ingram R.M."/>
            <person name="Kater M.M."/>
            <person name="Davies B."/>
            <person name="Angenent G.C."/>
            <person name="Colombo L."/>
        </authorList>
    </citation>
    <scope>NUCLEOTIDE SEQUENCE [MRNA] (ISOFORM 2)</scope>
    <source>
        <strain>cv. Columbia</strain>
        <tissue>Leaf</tissue>
    </source>
</reference>
<reference key="3">
    <citation type="journal article" date="1999" name="Nature">
        <title>Sequence and analysis of chromosome 2 of the plant Arabidopsis thaliana.</title>
        <authorList>
            <person name="Lin X."/>
            <person name="Kaul S."/>
            <person name="Rounsley S.D."/>
            <person name="Shea T.P."/>
            <person name="Benito M.-I."/>
            <person name="Town C.D."/>
            <person name="Fujii C.Y."/>
            <person name="Mason T.M."/>
            <person name="Bowman C.L."/>
            <person name="Barnstead M.E."/>
            <person name="Feldblyum T.V."/>
            <person name="Buell C.R."/>
            <person name="Ketchum K.A."/>
            <person name="Lee J.J."/>
            <person name="Ronning C.M."/>
            <person name="Koo H.L."/>
            <person name="Moffat K.S."/>
            <person name="Cronin L.A."/>
            <person name="Shen M."/>
            <person name="Pai G."/>
            <person name="Van Aken S."/>
            <person name="Umayam L."/>
            <person name="Tallon L.J."/>
            <person name="Gill J.E."/>
            <person name="Adams M.D."/>
            <person name="Carrera A.J."/>
            <person name="Creasy T.H."/>
            <person name="Goodman H.M."/>
            <person name="Somerville C.R."/>
            <person name="Copenhaver G.P."/>
            <person name="Preuss D."/>
            <person name="Nierman W.C."/>
            <person name="White O."/>
            <person name="Eisen J.A."/>
            <person name="Salzberg S.L."/>
            <person name="Fraser C.M."/>
            <person name="Venter J.C."/>
        </authorList>
    </citation>
    <scope>NUCLEOTIDE SEQUENCE [LARGE SCALE GENOMIC DNA]</scope>
    <source>
        <strain>cv. Columbia</strain>
    </source>
</reference>
<reference key="4">
    <citation type="journal article" date="2017" name="Plant J.">
        <title>Araport11: a complete reannotation of the Arabidopsis thaliana reference genome.</title>
        <authorList>
            <person name="Cheng C.Y."/>
            <person name="Krishnakumar V."/>
            <person name="Chan A.P."/>
            <person name="Thibaud-Nissen F."/>
            <person name="Schobel S."/>
            <person name="Town C.D."/>
        </authorList>
    </citation>
    <scope>GENOME REANNOTATION</scope>
    <source>
        <strain>cv. Columbia</strain>
    </source>
</reference>
<reference key="5">
    <citation type="journal article" date="2003" name="Science">
        <title>Empirical analysis of transcriptional activity in the Arabidopsis genome.</title>
        <authorList>
            <person name="Yamada K."/>
            <person name="Lim J."/>
            <person name="Dale J.M."/>
            <person name="Chen H."/>
            <person name="Shinn P."/>
            <person name="Palm C.J."/>
            <person name="Southwick A.M."/>
            <person name="Wu H.C."/>
            <person name="Kim C.J."/>
            <person name="Nguyen M."/>
            <person name="Pham P.K."/>
            <person name="Cheuk R.F."/>
            <person name="Karlin-Newmann G."/>
            <person name="Liu S.X."/>
            <person name="Lam B."/>
            <person name="Sakano H."/>
            <person name="Wu T."/>
            <person name="Yu G."/>
            <person name="Miranda M."/>
            <person name="Quach H.L."/>
            <person name="Tripp M."/>
            <person name="Chang C.H."/>
            <person name="Lee J.M."/>
            <person name="Toriumi M.J."/>
            <person name="Chan M.M."/>
            <person name="Tang C.C."/>
            <person name="Onodera C.S."/>
            <person name="Deng J.M."/>
            <person name="Akiyama K."/>
            <person name="Ansari Y."/>
            <person name="Arakawa T."/>
            <person name="Banh J."/>
            <person name="Banno F."/>
            <person name="Bowser L."/>
            <person name="Brooks S.Y."/>
            <person name="Carninci P."/>
            <person name="Chao Q."/>
            <person name="Choy N."/>
            <person name="Enju A."/>
            <person name="Goldsmith A.D."/>
            <person name="Gurjal M."/>
            <person name="Hansen N.F."/>
            <person name="Hayashizaki Y."/>
            <person name="Johnson-Hopson C."/>
            <person name="Hsuan V.W."/>
            <person name="Iida K."/>
            <person name="Karnes M."/>
            <person name="Khan S."/>
            <person name="Koesema E."/>
            <person name="Ishida J."/>
            <person name="Jiang P.X."/>
            <person name="Jones T."/>
            <person name="Kawai J."/>
            <person name="Kamiya A."/>
            <person name="Meyers C."/>
            <person name="Nakajima M."/>
            <person name="Narusaka M."/>
            <person name="Seki M."/>
            <person name="Sakurai T."/>
            <person name="Satou M."/>
            <person name="Tamse R."/>
            <person name="Vaysberg M."/>
            <person name="Wallender E.K."/>
            <person name="Wong C."/>
            <person name="Yamamura Y."/>
            <person name="Yuan S."/>
            <person name="Shinozaki K."/>
            <person name="Davis R.W."/>
            <person name="Theologis A."/>
            <person name="Ecker J.R."/>
        </authorList>
    </citation>
    <scope>NUCLEOTIDE SEQUENCE [LARGE SCALE MRNA] (ISOFORM 3)</scope>
    <source>
        <strain>cv. Columbia</strain>
    </source>
</reference>
<reference key="6">
    <citation type="journal article" date="1991" name="Genes Dev.">
        <title>AGL1-AGL6, an Arabidopsis gene family with similarity to floral homeotic and transcription factor genes.</title>
        <authorList>
            <person name="Ma H."/>
            <person name="Yanofsky M.F."/>
            <person name="Meyerowitz E.M."/>
        </authorList>
    </citation>
    <scope>NUCLEOTIDE SEQUENCE OF 1-141</scope>
</reference>
<reference key="7">
    <citation type="journal article" date="2004" name="Curr. Biol.">
        <title>The SEP4 gene of Arabidopsis thaliana functions in floral organ and meristem identity.</title>
        <authorList>
            <person name="Ditta G."/>
            <person name="Pinyopich A."/>
            <person name="Robles P."/>
            <person name="Pelaz S."/>
            <person name="Yanofsky M.F."/>
        </authorList>
    </citation>
    <scope>FUNCTION</scope>
    <scope>TISSUE SPECIFICITY</scope>
</reference>
<reference key="8">
    <citation type="journal article" date="2005" name="Mol. Genet. Genomics">
        <title>Mutant analysis, protein-protein interactions and subcellular localization of the Arabidopsis B sister (ABS) protein.</title>
        <authorList>
            <person name="Kaufmann K."/>
            <person name="Anfang N."/>
            <person name="Saedler H."/>
            <person name="Theissen G."/>
        </authorList>
    </citation>
    <scope>INTERACTION WITH TT16/AGL32</scope>
</reference>
<reference key="9">
    <citation type="journal article" date="2014" name="Nucleic Acids Res.">
        <title>Arabidopsis SEPALLATA proteins differ in cooperative DNA-binding during the formation of floral quartet-like complexes.</title>
        <authorList>
            <person name="Jetha K."/>
            <person name="Theissen G."/>
            <person name="Melzer R."/>
        </authorList>
    </citation>
    <scope>FUNCTION</scope>
    <scope>SUBUNIT</scope>
</reference>
<proteinExistence type="evidence at protein level"/>
<feature type="chain" id="PRO_0000199458" description="Agamous-like MADS-box protein AGL3">
    <location>
        <begin position="1"/>
        <end position="258"/>
    </location>
</feature>
<feature type="domain" description="MADS-box" evidence="1">
    <location>
        <begin position="3"/>
        <end position="57"/>
    </location>
</feature>
<feature type="domain" description="K-box" evidence="2">
    <location>
        <begin position="88"/>
        <end position="178"/>
    </location>
</feature>
<feature type="region of interest" description="Disordered" evidence="3">
    <location>
        <begin position="186"/>
        <end position="214"/>
    </location>
</feature>
<feature type="compositionally biased region" description="Low complexity" evidence="3">
    <location>
        <begin position="191"/>
        <end position="200"/>
    </location>
</feature>
<feature type="compositionally biased region" description="Polar residues" evidence="3">
    <location>
        <begin position="201"/>
        <end position="210"/>
    </location>
</feature>
<feature type="splice variant" id="VSP_008908" description="In isoform 2." evidence="8">
    <original>LEDSDAALTQSFWGSSAAEQQQQHQQQQQGMSSYQSNPPIQEAGFFKPLQGNVALQMSSHYNHNPANATNSATTSQNVNGFFPGWMV</original>
    <variation>VAIGIFYRKKLKPFVI</variation>
    <location>
        <begin position="172"/>
        <end position="258"/>
    </location>
</feature>
<feature type="splice variant" id="VSP_041587" description="In isoform 3." evidence="9">
    <location>
        <position position="229"/>
    </location>
</feature>
<feature type="sequence conflict" description="In Ref. 6." evidence="11" ref="6">
    <location>
        <begin position="58"/>
        <end position="92"/>
    </location>
</feature>
<keyword id="KW-0025">Alternative splicing</keyword>
<keyword id="KW-0217">Developmental protein</keyword>
<keyword id="KW-0221">Differentiation</keyword>
<keyword id="KW-0238">DNA-binding</keyword>
<keyword id="KW-0287">Flowering</keyword>
<keyword id="KW-0539">Nucleus</keyword>
<keyword id="KW-1185">Reference proteome</keyword>
<keyword id="KW-0804">Transcription</keyword>
<keyword id="KW-0805">Transcription regulation</keyword>
<comment type="function">
    <text evidence="4 6 7">Probable transcription factor that binds specifically to the CArG box DNA sequence 5'-CC (A/T)6 GG-3' (PubMed:25183521, PubMed:7632923). Plays an important role in the determination of flower meristem identity. Involved in the specification of sepal identity. Contributes to the development of petals, stamens and carpels (PubMed:15530395).</text>
</comment>
<comment type="subunit">
    <text evidence="5 6">Forms homodimers (PubMed:25183521). Interacts with TT16/AGL32 (PubMed:16080001).</text>
</comment>
<comment type="interaction">
    <interactant intactId="EBI-622036">
        <id>P29383</id>
    </interactant>
    <interactant intactId="EBI-1238460">
        <id>Q9FHZ1</id>
        <label>SCL23</label>
    </interactant>
    <organismsDiffer>false</organismsDiffer>
    <experiments>3</experiments>
</comment>
<comment type="interaction">
    <interactant intactId="EBI-622036">
        <id>P29383</id>
    </interactant>
    <interactant intactId="EBI-16100490">
        <id>Q2NJQ2</id>
        <label>AYWB_224</label>
    </interactant>
    <organismsDiffer>true</organismsDiffer>
    <experiments>3</experiments>
</comment>
<comment type="subcellular location">
    <subcellularLocation>
        <location>Nucleus</location>
    </subcellularLocation>
</comment>
<comment type="alternative products">
    <event type="alternative splicing"/>
    <isoform>
        <id>P29383-1</id>
        <name>1</name>
        <sequence type="displayed"/>
    </isoform>
    <isoform>
        <id>P29383-2</id>
        <name>2</name>
        <sequence type="described" ref="VSP_008908"/>
    </isoform>
    <isoform>
        <id>P29383-3</id>
        <name>3</name>
        <sequence type="described" ref="VSP_041587"/>
    </isoform>
</comment>
<comment type="tissue specificity">
    <text evidence="4 7">Expressed in aerial vegetative organs and flowers, but not in roots (PubMed:7632923). Expressed in flower primordia (PubMed:15530395).</text>
</comment>
<organism>
    <name type="scientific">Arabidopsis thaliana</name>
    <name type="common">Mouse-ear cress</name>
    <dbReference type="NCBI Taxonomy" id="3702"/>
    <lineage>
        <taxon>Eukaryota</taxon>
        <taxon>Viridiplantae</taxon>
        <taxon>Streptophyta</taxon>
        <taxon>Embryophyta</taxon>
        <taxon>Tracheophyta</taxon>
        <taxon>Spermatophyta</taxon>
        <taxon>Magnoliopsida</taxon>
        <taxon>eudicotyledons</taxon>
        <taxon>Gunneridae</taxon>
        <taxon>Pentapetalae</taxon>
        <taxon>rosids</taxon>
        <taxon>malvids</taxon>
        <taxon>Brassicales</taxon>
        <taxon>Brassicaceae</taxon>
        <taxon>Camelineae</taxon>
        <taxon>Arabidopsis</taxon>
    </lineage>
</organism>